<name>PROB_STRP7</name>
<feature type="chain" id="PRO_1000193704" description="Glutamate 5-kinase">
    <location>
        <begin position="1"/>
        <end position="369"/>
    </location>
</feature>
<feature type="domain" description="PUA" evidence="1">
    <location>
        <begin position="275"/>
        <end position="355"/>
    </location>
</feature>
<feature type="binding site" evidence="1">
    <location>
        <position position="9"/>
    </location>
    <ligand>
        <name>ATP</name>
        <dbReference type="ChEBI" id="CHEBI:30616"/>
    </ligand>
</feature>
<feature type="binding site" evidence="1">
    <location>
        <position position="49"/>
    </location>
    <ligand>
        <name>substrate</name>
    </ligand>
</feature>
<feature type="binding site" evidence="1">
    <location>
        <position position="136"/>
    </location>
    <ligand>
        <name>substrate</name>
    </ligand>
</feature>
<feature type="binding site" evidence="1">
    <location>
        <position position="148"/>
    </location>
    <ligand>
        <name>substrate</name>
    </ligand>
</feature>
<feature type="binding site" evidence="1">
    <location>
        <begin position="168"/>
        <end position="169"/>
    </location>
    <ligand>
        <name>ATP</name>
        <dbReference type="ChEBI" id="CHEBI:30616"/>
    </ligand>
</feature>
<feature type="binding site" evidence="1">
    <location>
        <begin position="210"/>
        <end position="216"/>
    </location>
    <ligand>
        <name>ATP</name>
        <dbReference type="ChEBI" id="CHEBI:30616"/>
    </ligand>
</feature>
<organism>
    <name type="scientific">Streptococcus pneumoniae (strain 70585)</name>
    <dbReference type="NCBI Taxonomy" id="488221"/>
    <lineage>
        <taxon>Bacteria</taxon>
        <taxon>Bacillati</taxon>
        <taxon>Bacillota</taxon>
        <taxon>Bacilli</taxon>
        <taxon>Lactobacillales</taxon>
        <taxon>Streptococcaceae</taxon>
        <taxon>Streptococcus</taxon>
    </lineage>
</organism>
<evidence type="ECO:0000255" key="1">
    <source>
        <dbReference type="HAMAP-Rule" id="MF_00456"/>
    </source>
</evidence>
<sequence length="369" mass="39873">MKYKRIVFKVGTSSLTNEDGSLSRSKVKDITQQLAMLHEAGHELILVSSGAIAAGFGALGFKKRPTKIADKQASAAVGQGLLLEEYTTNLLLRQIVSAQILLTQDDFVDKRRYKNAHQALSVLLNRGAIPIINENDSVVIDELKVGDNDTLSAQVAAMVQADLLVFLTDVDGLYTGNPNSDPRAKRLERIETINREIIDMAGGAGSSNGTGGMLTKIKAATIATESGVPVYICSSLKSDSMIEAAEETEDGSYFVAQEKGLRTQKQWLAFYAQSQGSIWVDKGAAEALSQHGKSLLLSGIVEAEGAFSYGDIVTVFDKESGKSLGKGRVQFGASALEDMLRSQKAKGVLIYRDDWISITPEIQLLFTEF</sequence>
<gene>
    <name evidence="1" type="primary">proB</name>
    <name type="ordered locus">SP70585_0970</name>
</gene>
<keyword id="KW-0028">Amino-acid biosynthesis</keyword>
<keyword id="KW-0067">ATP-binding</keyword>
<keyword id="KW-0963">Cytoplasm</keyword>
<keyword id="KW-0418">Kinase</keyword>
<keyword id="KW-0547">Nucleotide-binding</keyword>
<keyword id="KW-0641">Proline biosynthesis</keyword>
<keyword id="KW-0808">Transferase</keyword>
<accession>C1C6R3</accession>
<comment type="function">
    <text evidence="1">Catalyzes the transfer of a phosphate group to glutamate to form L-glutamate 5-phosphate.</text>
</comment>
<comment type="catalytic activity">
    <reaction evidence="1">
        <text>L-glutamate + ATP = L-glutamyl 5-phosphate + ADP</text>
        <dbReference type="Rhea" id="RHEA:14877"/>
        <dbReference type="ChEBI" id="CHEBI:29985"/>
        <dbReference type="ChEBI" id="CHEBI:30616"/>
        <dbReference type="ChEBI" id="CHEBI:58274"/>
        <dbReference type="ChEBI" id="CHEBI:456216"/>
        <dbReference type="EC" id="2.7.2.11"/>
    </reaction>
</comment>
<comment type="pathway">
    <text evidence="1">Amino-acid biosynthesis; L-proline biosynthesis; L-glutamate 5-semialdehyde from L-glutamate: step 1/2.</text>
</comment>
<comment type="subcellular location">
    <subcellularLocation>
        <location evidence="1">Cytoplasm</location>
    </subcellularLocation>
</comment>
<comment type="similarity">
    <text evidence="1">Belongs to the glutamate 5-kinase family.</text>
</comment>
<proteinExistence type="inferred from homology"/>
<reference key="1">
    <citation type="journal article" date="2010" name="Genome Biol.">
        <title>Structure and dynamics of the pan-genome of Streptococcus pneumoniae and closely related species.</title>
        <authorList>
            <person name="Donati C."/>
            <person name="Hiller N.L."/>
            <person name="Tettelin H."/>
            <person name="Muzzi A."/>
            <person name="Croucher N.J."/>
            <person name="Angiuoli S.V."/>
            <person name="Oggioni M."/>
            <person name="Dunning Hotopp J.C."/>
            <person name="Hu F.Z."/>
            <person name="Riley D.R."/>
            <person name="Covacci A."/>
            <person name="Mitchell T.J."/>
            <person name="Bentley S.D."/>
            <person name="Kilian M."/>
            <person name="Ehrlich G.D."/>
            <person name="Rappuoli R."/>
            <person name="Moxon E.R."/>
            <person name="Masignani V."/>
        </authorList>
    </citation>
    <scope>NUCLEOTIDE SEQUENCE [LARGE SCALE GENOMIC DNA]</scope>
    <source>
        <strain>70585</strain>
    </source>
</reference>
<dbReference type="EC" id="2.7.2.11" evidence="1"/>
<dbReference type="EMBL" id="CP000918">
    <property type="protein sequence ID" value="ACO17668.1"/>
    <property type="molecule type" value="Genomic_DNA"/>
</dbReference>
<dbReference type="RefSeq" id="WP_000875741.1">
    <property type="nucleotide sequence ID" value="NC_012468.1"/>
</dbReference>
<dbReference type="SMR" id="C1C6R3"/>
<dbReference type="GeneID" id="45653723"/>
<dbReference type="KEGG" id="snm:SP70585_0970"/>
<dbReference type="HOGENOM" id="CLU_025400_2_0_9"/>
<dbReference type="UniPathway" id="UPA00098">
    <property type="reaction ID" value="UER00359"/>
</dbReference>
<dbReference type="Proteomes" id="UP000002211">
    <property type="component" value="Chromosome"/>
</dbReference>
<dbReference type="GO" id="GO:0005829">
    <property type="term" value="C:cytosol"/>
    <property type="evidence" value="ECO:0007669"/>
    <property type="project" value="TreeGrafter"/>
</dbReference>
<dbReference type="GO" id="GO:0005524">
    <property type="term" value="F:ATP binding"/>
    <property type="evidence" value="ECO:0007669"/>
    <property type="project" value="UniProtKB-KW"/>
</dbReference>
<dbReference type="GO" id="GO:0004349">
    <property type="term" value="F:glutamate 5-kinase activity"/>
    <property type="evidence" value="ECO:0007669"/>
    <property type="project" value="UniProtKB-UniRule"/>
</dbReference>
<dbReference type="GO" id="GO:0003723">
    <property type="term" value="F:RNA binding"/>
    <property type="evidence" value="ECO:0007669"/>
    <property type="project" value="InterPro"/>
</dbReference>
<dbReference type="GO" id="GO:0055129">
    <property type="term" value="P:L-proline biosynthetic process"/>
    <property type="evidence" value="ECO:0007669"/>
    <property type="project" value="UniProtKB-UniRule"/>
</dbReference>
<dbReference type="CDD" id="cd04242">
    <property type="entry name" value="AAK_G5K_ProB"/>
    <property type="match status" value="1"/>
</dbReference>
<dbReference type="CDD" id="cd21157">
    <property type="entry name" value="PUA_G5K"/>
    <property type="match status" value="1"/>
</dbReference>
<dbReference type="FunFam" id="2.30.130.10:FF:000011">
    <property type="entry name" value="Glutamate 5-kinase"/>
    <property type="match status" value="1"/>
</dbReference>
<dbReference type="FunFam" id="3.40.1160.10:FF:000018">
    <property type="entry name" value="Glutamate 5-kinase"/>
    <property type="match status" value="1"/>
</dbReference>
<dbReference type="Gene3D" id="3.40.1160.10">
    <property type="entry name" value="Acetylglutamate kinase-like"/>
    <property type="match status" value="1"/>
</dbReference>
<dbReference type="Gene3D" id="2.30.130.10">
    <property type="entry name" value="PUA domain"/>
    <property type="match status" value="1"/>
</dbReference>
<dbReference type="HAMAP" id="MF_00456">
    <property type="entry name" value="ProB"/>
    <property type="match status" value="1"/>
</dbReference>
<dbReference type="InterPro" id="IPR036393">
    <property type="entry name" value="AceGlu_kinase-like_sf"/>
</dbReference>
<dbReference type="InterPro" id="IPR001048">
    <property type="entry name" value="Asp/Glu/Uridylate_kinase"/>
</dbReference>
<dbReference type="InterPro" id="IPR041739">
    <property type="entry name" value="G5K_ProB"/>
</dbReference>
<dbReference type="InterPro" id="IPR001057">
    <property type="entry name" value="Glu/AcGlu_kinase"/>
</dbReference>
<dbReference type="InterPro" id="IPR011529">
    <property type="entry name" value="Glu_5kinase"/>
</dbReference>
<dbReference type="InterPro" id="IPR005715">
    <property type="entry name" value="Glu_5kinase/COase_Synthase"/>
</dbReference>
<dbReference type="InterPro" id="IPR019797">
    <property type="entry name" value="Glutamate_5-kinase_CS"/>
</dbReference>
<dbReference type="InterPro" id="IPR002478">
    <property type="entry name" value="PUA"/>
</dbReference>
<dbReference type="InterPro" id="IPR015947">
    <property type="entry name" value="PUA-like_sf"/>
</dbReference>
<dbReference type="InterPro" id="IPR036974">
    <property type="entry name" value="PUA_sf"/>
</dbReference>
<dbReference type="NCBIfam" id="TIGR01027">
    <property type="entry name" value="proB"/>
    <property type="match status" value="1"/>
</dbReference>
<dbReference type="PANTHER" id="PTHR43654">
    <property type="entry name" value="GLUTAMATE 5-KINASE"/>
    <property type="match status" value="1"/>
</dbReference>
<dbReference type="PANTHER" id="PTHR43654:SF1">
    <property type="entry name" value="ISOPENTENYL PHOSPHATE KINASE"/>
    <property type="match status" value="1"/>
</dbReference>
<dbReference type="Pfam" id="PF00696">
    <property type="entry name" value="AA_kinase"/>
    <property type="match status" value="1"/>
</dbReference>
<dbReference type="Pfam" id="PF01472">
    <property type="entry name" value="PUA"/>
    <property type="match status" value="1"/>
</dbReference>
<dbReference type="PIRSF" id="PIRSF000729">
    <property type="entry name" value="GK"/>
    <property type="match status" value="1"/>
</dbReference>
<dbReference type="PRINTS" id="PR00474">
    <property type="entry name" value="GLU5KINASE"/>
</dbReference>
<dbReference type="SMART" id="SM00359">
    <property type="entry name" value="PUA"/>
    <property type="match status" value="1"/>
</dbReference>
<dbReference type="SUPFAM" id="SSF53633">
    <property type="entry name" value="Carbamate kinase-like"/>
    <property type="match status" value="1"/>
</dbReference>
<dbReference type="SUPFAM" id="SSF88697">
    <property type="entry name" value="PUA domain-like"/>
    <property type="match status" value="1"/>
</dbReference>
<dbReference type="PROSITE" id="PS00902">
    <property type="entry name" value="GLUTAMATE_5_KINASE"/>
    <property type="match status" value="1"/>
</dbReference>
<dbReference type="PROSITE" id="PS50890">
    <property type="entry name" value="PUA"/>
    <property type="match status" value="1"/>
</dbReference>
<protein>
    <recommendedName>
        <fullName evidence="1">Glutamate 5-kinase</fullName>
        <ecNumber evidence="1">2.7.2.11</ecNumber>
    </recommendedName>
    <alternativeName>
        <fullName evidence="1">Gamma-glutamyl kinase</fullName>
        <shortName evidence="1">GK</shortName>
    </alternativeName>
</protein>